<organism>
    <name type="scientific">Mus musculus</name>
    <name type="common">Mouse</name>
    <dbReference type="NCBI Taxonomy" id="10090"/>
    <lineage>
        <taxon>Eukaryota</taxon>
        <taxon>Metazoa</taxon>
        <taxon>Chordata</taxon>
        <taxon>Craniata</taxon>
        <taxon>Vertebrata</taxon>
        <taxon>Euteleostomi</taxon>
        <taxon>Mammalia</taxon>
        <taxon>Eutheria</taxon>
        <taxon>Euarchontoglires</taxon>
        <taxon>Glires</taxon>
        <taxon>Rodentia</taxon>
        <taxon>Myomorpha</taxon>
        <taxon>Muroidea</taxon>
        <taxon>Muridae</taxon>
        <taxon>Murinae</taxon>
        <taxon>Mus</taxon>
        <taxon>Mus</taxon>
    </lineage>
</organism>
<sequence>MNLAEICENAKKGREYALLGNYDSSMVYYQGVIQQIQRHCQSLRDPATKAKWQQVRQELLEEYEQVKSIVSTLESFKMDKPPDFPVSCRDEPFRDPAVWPPPVPAEHRAPPQIRRPNREVRPLRKDVGAGARGLVGRAHQISKSDKPASRDKDYRARGRDDKARKNVQDGASDSEIPKFDGAGYDKDLVEALERDIVSRNPSIHWDDIADLEEAKKLLREAVVLPMWMPDFFKGIRRPWKGVLMVGPPGTGKTMLAKAVATECGTTFFNVSSSTLTSKYRGESEKLVRLLFEMARFYAPTTIFIDEIDSICSRRGTSDEHEASRRVKSELLIQMDGVGGALENDDPSKMVMVLAATNFPWDIDEALRRRLEKRIYIPLPTAKGRAELLKISLREVELDPDVHLEDIADKTEGYSGADITNICRDASLMAMRRRINGLSPEEIRALSKEELQMPVTRGDLELALKKIAKSVSAADLEKYEKWMVEFGSA</sequence>
<accession>Q8K0T4</accession>
<name>KATL1_MOUSE</name>
<feature type="chain" id="PRO_0000084602" description="Katanin p60 ATPase-containing subunit A-like 1">
    <location>
        <begin position="1"/>
        <end position="488"/>
    </location>
</feature>
<feature type="region of interest" description="Disordered" evidence="4">
    <location>
        <begin position="95"/>
        <end position="179"/>
    </location>
</feature>
<feature type="compositionally biased region" description="Basic and acidic residues" evidence="4">
    <location>
        <begin position="116"/>
        <end position="127"/>
    </location>
</feature>
<feature type="compositionally biased region" description="Low complexity" evidence="4">
    <location>
        <begin position="128"/>
        <end position="138"/>
    </location>
</feature>
<feature type="compositionally biased region" description="Basic and acidic residues" evidence="4">
    <location>
        <begin position="142"/>
        <end position="167"/>
    </location>
</feature>
<feature type="binding site" evidence="3">
    <location>
        <begin position="246"/>
        <end position="253"/>
    </location>
    <ligand>
        <name>ATP</name>
        <dbReference type="ChEBI" id="CHEBI:30616"/>
    </ligand>
</feature>
<feature type="modified residue" description="N-acetylmethionine" evidence="2">
    <location>
        <position position="1"/>
    </location>
</feature>
<feature type="modified residue" description="Phosphoserine" evidence="1">
    <location>
        <position position="172"/>
    </location>
</feature>
<feature type="mutagenesis site" description="Males are infertile and show a significant reduction in the number of spermatids in testis, due to premature exfoliation of spermatids from the seminiferous epithelium. Sertoli cells contain reduced numbers of stable microtubules. The protein localizes exclusively to the basal compartment of Sertoli cells." evidence="5">
    <original>L</original>
    <variation>V</variation>
    <location>
        <position position="286"/>
    </location>
</feature>
<evidence type="ECO:0000250" key="1">
    <source>
        <dbReference type="UniProtKB" id="Q5XIK7"/>
    </source>
</evidence>
<evidence type="ECO:0000250" key="2">
    <source>
        <dbReference type="UniProtKB" id="Q9BW62"/>
    </source>
</evidence>
<evidence type="ECO:0000255" key="3">
    <source>
        <dbReference type="HAMAP-Rule" id="MF_03024"/>
    </source>
</evidence>
<evidence type="ECO:0000256" key="4">
    <source>
        <dbReference type="SAM" id="MobiDB-lite"/>
    </source>
</evidence>
<evidence type="ECO:0000269" key="5">
    <source>
    </source>
</evidence>
<dbReference type="EC" id="5.6.1.1" evidence="3"/>
<dbReference type="EMBL" id="BC030434">
    <property type="protein sequence ID" value="AAH30434.1"/>
    <property type="molecule type" value="mRNA"/>
</dbReference>
<dbReference type="CCDS" id="CCDS39404.1"/>
<dbReference type="RefSeq" id="NP_705800.1">
    <property type="nucleotide sequence ID" value="NM_153572.2"/>
</dbReference>
<dbReference type="RefSeq" id="XP_006504891.1">
    <property type="nucleotide sequence ID" value="XM_006504828.5"/>
</dbReference>
<dbReference type="RefSeq" id="XP_006504892.1">
    <property type="nucleotide sequence ID" value="XM_006504829.4"/>
</dbReference>
<dbReference type="SMR" id="Q8K0T4"/>
<dbReference type="BioGRID" id="231194">
    <property type="interactions" value="1"/>
</dbReference>
<dbReference type="FunCoup" id="Q8K0T4">
    <property type="interactions" value="1558"/>
</dbReference>
<dbReference type="STRING" id="10090.ENSMUSP00000043210"/>
<dbReference type="iPTMnet" id="Q8K0T4"/>
<dbReference type="PhosphoSitePlus" id="Q8K0T4"/>
<dbReference type="SwissPalm" id="Q8K0T4"/>
<dbReference type="PaxDb" id="10090-ENSMUSP00000043210"/>
<dbReference type="PeptideAtlas" id="Q8K0T4"/>
<dbReference type="ProteomicsDB" id="301742"/>
<dbReference type="Pumba" id="Q8K0T4"/>
<dbReference type="Antibodypedia" id="49047">
    <property type="antibodies" value="200 antibodies from 20 providers"/>
</dbReference>
<dbReference type="DNASU" id="231912"/>
<dbReference type="Ensembl" id="ENSMUST00000047257.15">
    <property type="protein sequence ID" value="ENSMUSP00000043210.9"/>
    <property type="gene ID" value="ENSMUSG00000041298.17"/>
</dbReference>
<dbReference type="GeneID" id="231912"/>
<dbReference type="KEGG" id="mmu:231912"/>
<dbReference type="UCSC" id="uc009aow.2">
    <property type="organism name" value="mouse"/>
</dbReference>
<dbReference type="AGR" id="MGI:2387638"/>
<dbReference type="CTD" id="84056"/>
<dbReference type="MGI" id="MGI:2387638">
    <property type="gene designation" value="Katnal1"/>
</dbReference>
<dbReference type="VEuPathDB" id="HostDB:ENSMUSG00000041298"/>
<dbReference type="eggNOG" id="KOG0738">
    <property type="taxonomic scope" value="Eukaryota"/>
</dbReference>
<dbReference type="GeneTree" id="ENSGT00940000156630"/>
<dbReference type="HOGENOM" id="CLU_000688_21_1_1"/>
<dbReference type="InParanoid" id="Q8K0T4"/>
<dbReference type="OMA" id="KGRWQQV"/>
<dbReference type="OrthoDB" id="5334845at2759"/>
<dbReference type="PhylomeDB" id="Q8K0T4"/>
<dbReference type="TreeFam" id="TF323170"/>
<dbReference type="BioGRID-ORCS" id="231912">
    <property type="hits" value="1 hit in 78 CRISPR screens"/>
</dbReference>
<dbReference type="PRO" id="PR:Q8K0T4"/>
<dbReference type="Proteomes" id="UP000000589">
    <property type="component" value="Chromosome 5"/>
</dbReference>
<dbReference type="RNAct" id="Q8K0T4">
    <property type="molecule type" value="protein"/>
</dbReference>
<dbReference type="Bgee" id="ENSMUSG00000041298">
    <property type="expression patterns" value="Expressed in spermatid and 194 other cell types or tissues"/>
</dbReference>
<dbReference type="ExpressionAtlas" id="Q8K0T4">
    <property type="expression patterns" value="baseline and differential"/>
</dbReference>
<dbReference type="GO" id="GO:0005813">
    <property type="term" value="C:centrosome"/>
    <property type="evidence" value="ECO:0007669"/>
    <property type="project" value="UniProtKB-UniRule"/>
</dbReference>
<dbReference type="GO" id="GO:0005737">
    <property type="term" value="C:cytoplasm"/>
    <property type="evidence" value="ECO:0000250"/>
    <property type="project" value="UniProtKB"/>
</dbReference>
<dbReference type="GO" id="GO:0005829">
    <property type="term" value="C:cytosol"/>
    <property type="evidence" value="ECO:0007669"/>
    <property type="project" value="Ensembl"/>
</dbReference>
<dbReference type="GO" id="GO:0008352">
    <property type="term" value="C:katanin complex"/>
    <property type="evidence" value="ECO:0007669"/>
    <property type="project" value="Ensembl"/>
</dbReference>
<dbReference type="GO" id="GO:0005874">
    <property type="term" value="C:microtubule"/>
    <property type="evidence" value="ECO:0000250"/>
    <property type="project" value="UniProtKB"/>
</dbReference>
<dbReference type="GO" id="GO:0015630">
    <property type="term" value="C:microtubule cytoskeleton"/>
    <property type="evidence" value="ECO:0000314"/>
    <property type="project" value="MGI"/>
</dbReference>
<dbReference type="GO" id="GO:0005739">
    <property type="term" value="C:mitochondrion"/>
    <property type="evidence" value="ECO:0007669"/>
    <property type="project" value="Ensembl"/>
</dbReference>
<dbReference type="GO" id="GO:0072686">
    <property type="term" value="C:mitotic spindle"/>
    <property type="evidence" value="ECO:0007669"/>
    <property type="project" value="Ensembl"/>
</dbReference>
<dbReference type="GO" id="GO:0005819">
    <property type="term" value="C:spindle"/>
    <property type="evidence" value="ECO:0000250"/>
    <property type="project" value="UniProtKB"/>
</dbReference>
<dbReference type="GO" id="GO:0000922">
    <property type="term" value="C:spindle pole"/>
    <property type="evidence" value="ECO:0000250"/>
    <property type="project" value="UniProtKB"/>
</dbReference>
<dbReference type="GO" id="GO:0005524">
    <property type="term" value="F:ATP binding"/>
    <property type="evidence" value="ECO:0007669"/>
    <property type="project" value="UniProtKB-KW"/>
</dbReference>
<dbReference type="GO" id="GO:0016887">
    <property type="term" value="F:ATP hydrolysis activity"/>
    <property type="evidence" value="ECO:0007669"/>
    <property type="project" value="InterPro"/>
</dbReference>
<dbReference type="GO" id="GO:0042802">
    <property type="term" value="F:identical protein binding"/>
    <property type="evidence" value="ECO:0007669"/>
    <property type="project" value="Ensembl"/>
</dbReference>
<dbReference type="GO" id="GO:0008017">
    <property type="term" value="F:microtubule binding"/>
    <property type="evidence" value="ECO:0007669"/>
    <property type="project" value="UniProtKB-UniRule"/>
</dbReference>
<dbReference type="GO" id="GO:0008568">
    <property type="term" value="F:microtubule severing ATPase activity"/>
    <property type="evidence" value="ECO:0000314"/>
    <property type="project" value="MGI"/>
</dbReference>
<dbReference type="GO" id="GO:0051013">
    <property type="term" value="P:microtubule severing"/>
    <property type="evidence" value="ECO:0000314"/>
    <property type="project" value="MGI"/>
</dbReference>
<dbReference type="GO" id="GO:0007283">
    <property type="term" value="P:spermatogenesis"/>
    <property type="evidence" value="ECO:0000315"/>
    <property type="project" value="MGI"/>
</dbReference>
<dbReference type="CDD" id="cd21748">
    <property type="entry name" value="Kp60-NTD"/>
    <property type="match status" value="1"/>
</dbReference>
<dbReference type="CDD" id="cd19522">
    <property type="entry name" value="RecA-like_KTNA1"/>
    <property type="match status" value="1"/>
</dbReference>
<dbReference type="FunFam" id="1.10.8.60:FF:000025">
    <property type="entry name" value="Katanin p60 ATPase-containing subunit A1"/>
    <property type="match status" value="1"/>
</dbReference>
<dbReference type="FunFam" id="1.20.58.80:FF:000003">
    <property type="entry name" value="Katanin p60 ATPase-containing subunit A1"/>
    <property type="match status" value="1"/>
</dbReference>
<dbReference type="FunFam" id="3.40.50.300:FF:000159">
    <property type="entry name" value="Katanin p60 ATPase-containing subunit A1"/>
    <property type="match status" value="1"/>
</dbReference>
<dbReference type="Gene3D" id="1.10.8.60">
    <property type="match status" value="1"/>
</dbReference>
<dbReference type="Gene3D" id="3.40.50.300">
    <property type="entry name" value="P-loop containing nucleotide triphosphate hydrolases"/>
    <property type="match status" value="1"/>
</dbReference>
<dbReference type="Gene3D" id="1.20.58.80">
    <property type="entry name" value="Phosphotransferase system, lactose/cellobiose-type IIA subunit"/>
    <property type="match status" value="1"/>
</dbReference>
<dbReference type="HAMAP" id="MF_03023">
    <property type="entry name" value="Katanin_p60_A1"/>
    <property type="match status" value="1"/>
</dbReference>
<dbReference type="HAMAP" id="MF_03024">
    <property type="entry name" value="Katanin_p60_AL1"/>
    <property type="match status" value="1"/>
</dbReference>
<dbReference type="InterPro" id="IPR003593">
    <property type="entry name" value="AAA+_ATPase"/>
</dbReference>
<dbReference type="InterPro" id="IPR041569">
    <property type="entry name" value="AAA_lid_3"/>
</dbReference>
<dbReference type="InterPro" id="IPR003959">
    <property type="entry name" value="ATPase_AAA_core"/>
</dbReference>
<dbReference type="InterPro" id="IPR003960">
    <property type="entry name" value="ATPase_AAA_CS"/>
</dbReference>
<dbReference type="InterPro" id="IPR028596">
    <property type="entry name" value="KATNA1"/>
</dbReference>
<dbReference type="InterPro" id="IPR048611">
    <property type="entry name" value="KATNA1_MIT"/>
</dbReference>
<dbReference type="InterPro" id="IPR028594">
    <property type="entry name" value="Katnal1_chordates"/>
</dbReference>
<dbReference type="InterPro" id="IPR048612">
    <property type="entry name" value="KTNA1_AAA_dom"/>
</dbReference>
<dbReference type="InterPro" id="IPR050304">
    <property type="entry name" value="MT-severing_AAA_ATPase"/>
</dbReference>
<dbReference type="InterPro" id="IPR027417">
    <property type="entry name" value="P-loop_NTPase"/>
</dbReference>
<dbReference type="InterPro" id="IPR015415">
    <property type="entry name" value="Spast_Vps4_C"/>
</dbReference>
<dbReference type="PANTHER" id="PTHR23074">
    <property type="entry name" value="AAA DOMAIN-CONTAINING"/>
    <property type="match status" value="1"/>
</dbReference>
<dbReference type="PANTHER" id="PTHR23074:SF65">
    <property type="entry name" value="KATANIN P60 ATPASE-CONTAINING SUBUNIT A-LIKE 1"/>
    <property type="match status" value="1"/>
</dbReference>
<dbReference type="Pfam" id="PF00004">
    <property type="entry name" value="AAA"/>
    <property type="match status" value="1"/>
</dbReference>
<dbReference type="Pfam" id="PF17862">
    <property type="entry name" value="AAA_lid_3"/>
    <property type="match status" value="1"/>
</dbReference>
<dbReference type="Pfam" id="PF21126">
    <property type="entry name" value="KATNA1_MIT"/>
    <property type="match status" value="1"/>
</dbReference>
<dbReference type="Pfam" id="PF09336">
    <property type="entry name" value="Vps4_C"/>
    <property type="match status" value="1"/>
</dbReference>
<dbReference type="SMART" id="SM00382">
    <property type="entry name" value="AAA"/>
    <property type="match status" value="1"/>
</dbReference>
<dbReference type="SUPFAM" id="SSF52540">
    <property type="entry name" value="P-loop containing nucleoside triphosphate hydrolases"/>
    <property type="match status" value="1"/>
</dbReference>
<dbReference type="PROSITE" id="PS00674">
    <property type="entry name" value="AAA"/>
    <property type="match status" value="1"/>
</dbReference>
<comment type="function">
    <text evidence="2 5">Regulates microtubule dynamics in Sertoli cells, a process that is essential for spermiogenesis and male fertility. Severs microtubules in an ATP-dependent manner, promoting rapid reorganization of cellular microtubule arrays (PubMed:22654668). Has microtubule-severing activity in vitro (By similarity).</text>
</comment>
<comment type="catalytic activity">
    <reaction evidence="3">
        <text>n ATP + n H2O + a microtubule = n ADP + n phosphate + (n+1) alpha/beta tubulin heterodimers.</text>
        <dbReference type="EC" id="5.6.1.1"/>
    </reaction>
</comment>
<comment type="subunit">
    <text evidence="2">Interacts with KATNB1 and KATNBL1.</text>
</comment>
<comment type="subcellular location">
    <subcellularLocation>
        <location evidence="3 5">Cytoplasm</location>
        <location evidence="3 5">Cytoskeleton</location>
    </subcellularLocation>
    <subcellularLocation>
        <location evidence="2">Cytoplasm</location>
    </subcellularLocation>
    <subcellularLocation>
        <location evidence="2">Cytoplasm</location>
        <location evidence="2">Cytoskeleton</location>
        <location evidence="2">Spindle pole</location>
    </subcellularLocation>
    <subcellularLocation>
        <location evidence="2">Cytoplasm</location>
        <location evidence="2">Cytoskeleton</location>
        <location evidence="2">Spindle</location>
    </subcellularLocation>
    <text evidence="2 5">Colocalizes with microtubules throughout the basal and adluminal compartments of Sertoli cells (PubMed:22654668). Localizes within the cytoplasm, partially overlapping with microtubules, in interphase and to the mitotic spindle and spindle poles during mitosis (By similarity).</text>
</comment>
<comment type="tissue specificity">
    <text evidence="5">Widely expressed, including in testis, brain, heart, lung, kidney, liver, spleen, seminal vesicles and ovary. In testis, restricted to Sertoli cells within the seminiferous epithelium (at protein level).</text>
</comment>
<comment type="developmental stage">
    <text evidence="5">Expressed in Sertoli cells from 15.5 dpc onwards (at protein level).</text>
</comment>
<comment type="similarity">
    <text evidence="3">Belongs to the AAA ATPase family. Katanin p60 subunit A1 subfamily. A-like 1 sub-subfamily.</text>
</comment>
<reference key="1">
    <citation type="journal article" date="2004" name="Genome Res.">
        <title>The status, quality, and expansion of the NIH full-length cDNA project: the Mammalian Gene Collection (MGC).</title>
        <authorList>
            <consortium name="The MGC Project Team"/>
        </authorList>
    </citation>
    <scope>NUCLEOTIDE SEQUENCE [LARGE SCALE MRNA]</scope>
    <source>
        <tissue>Eye</tissue>
    </source>
</reference>
<reference key="2">
    <citation type="journal article" date="2010" name="Cell">
        <title>A tissue-specific atlas of mouse protein phosphorylation and expression.</title>
        <authorList>
            <person name="Huttlin E.L."/>
            <person name="Jedrychowski M.P."/>
            <person name="Elias J.E."/>
            <person name="Goswami T."/>
            <person name="Rad R."/>
            <person name="Beausoleil S.A."/>
            <person name="Villen J."/>
            <person name="Haas W."/>
            <person name="Sowa M.E."/>
            <person name="Gygi S.P."/>
        </authorList>
    </citation>
    <scope>IDENTIFICATION BY MASS SPECTROMETRY [LARGE SCALE ANALYSIS]</scope>
    <source>
        <tissue>Testis</tissue>
    </source>
</reference>
<reference key="3">
    <citation type="journal article" date="2012" name="PLoS Genet.">
        <title>KATNAL1 regulation of Sertoli cell microtubule dynamics is essential for spermiogenesis and male fertility.</title>
        <authorList>
            <person name="Smith L.B."/>
            <person name="Milne L."/>
            <person name="Nelson N."/>
            <person name="Eddie S."/>
            <person name="Brown P."/>
            <person name="Atanassova N."/>
            <person name="O'Bryan M.K."/>
            <person name="O'Donnell L."/>
            <person name="Rhodes D."/>
            <person name="Wells S."/>
            <person name="Napper D."/>
            <person name="Nolan P."/>
            <person name="Lalanne Z."/>
            <person name="Cheeseman M."/>
            <person name="Peters J."/>
        </authorList>
    </citation>
    <scope>FUNCTION</scope>
    <scope>SUBCELLULAR LOCATION</scope>
    <scope>TISSUE SPECIFICITY</scope>
    <scope>DEVELOPMENTAL STAGE</scope>
    <scope>MUTAGENESIS OF LEU-286</scope>
</reference>
<keyword id="KW-0007">Acetylation</keyword>
<keyword id="KW-0067">ATP-binding</keyword>
<keyword id="KW-0963">Cytoplasm</keyword>
<keyword id="KW-0206">Cytoskeleton</keyword>
<keyword id="KW-0413">Isomerase</keyword>
<keyword id="KW-0493">Microtubule</keyword>
<keyword id="KW-0547">Nucleotide-binding</keyword>
<keyword id="KW-0597">Phosphoprotein</keyword>
<keyword id="KW-1185">Reference proteome</keyword>
<protein>
    <recommendedName>
        <fullName evidence="3">Katanin p60 ATPase-containing subunit A-like 1</fullName>
        <shortName evidence="3">Katanin p60 subunit A-like 1</shortName>
        <ecNumber evidence="3">5.6.1.1</ecNumber>
    </recommendedName>
    <alternativeName>
        <fullName evidence="3">p60 katanin-like 1</fullName>
    </alternativeName>
</protein>
<gene>
    <name type="primary">Katnal1</name>
</gene>
<proteinExistence type="evidence at protein level"/>